<keyword id="KW-0488">Methylation</keyword>
<keyword id="KW-0687">Ribonucleoprotein</keyword>
<keyword id="KW-0689">Ribosomal protein</keyword>
<keyword id="KW-0694">RNA-binding</keyword>
<keyword id="KW-0699">rRNA-binding</keyword>
<name>RL11_VIBCM</name>
<accession>C3LR56</accession>
<dbReference type="EMBL" id="CP001233">
    <property type="protein sequence ID" value="ACP04636.1"/>
    <property type="molecule type" value="Genomic_DNA"/>
</dbReference>
<dbReference type="RefSeq" id="WP_001085796.1">
    <property type="nucleotide sequence ID" value="NC_012578.1"/>
</dbReference>
<dbReference type="SMR" id="C3LR56"/>
<dbReference type="GeneID" id="88783729"/>
<dbReference type="KEGG" id="vcm:VCM66_0308"/>
<dbReference type="HOGENOM" id="CLU_074237_2_0_6"/>
<dbReference type="Proteomes" id="UP000001217">
    <property type="component" value="Chromosome I"/>
</dbReference>
<dbReference type="GO" id="GO:0022625">
    <property type="term" value="C:cytosolic large ribosomal subunit"/>
    <property type="evidence" value="ECO:0007669"/>
    <property type="project" value="TreeGrafter"/>
</dbReference>
<dbReference type="GO" id="GO:0070180">
    <property type="term" value="F:large ribosomal subunit rRNA binding"/>
    <property type="evidence" value="ECO:0007669"/>
    <property type="project" value="UniProtKB-UniRule"/>
</dbReference>
<dbReference type="GO" id="GO:0003735">
    <property type="term" value="F:structural constituent of ribosome"/>
    <property type="evidence" value="ECO:0007669"/>
    <property type="project" value="InterPro"/>
</dbReference>
<dbReference type="GO" id="GO:0006412">
    <property type="term" value="P:translation"/>
    <property type="evidence" value="ECO:0007669"/>
    <property type="project" value="UniProtKB-UniRule"/>
</dbReference>
<dbReference type="CDD" id="cd00349">
    <property type="entry name" value="Ribosomal_L11"/>
    <property type="match status" value="1"/>
</dbReference>
<dbReference type="FunFam" id="1.10.10.250:FF:000001">
    <property type="entry name" value="50S ribosomal protein L11"/>
    <property type="match status" value="1"/>
</dbReference>
<dbReference type="FunFam" id="3.30.1550.10:FF:000001">
    <property type="entry name" value="50S ribosomal protein L11"/>
    <property type="match status" value="1"/>
</dbReference>
<dbReference type="Gene3D" id="1.10.10.250">
    <property type="entry name" value="Ribosomal protein L11, C-terminal domain"/>
    <property type="match status" value="1"/>
</dbReference>
<dbReference type="Gene3D" id="3.30.1550.10">
    <property type="entry name" value="Ribosomal protein L11/L12, N-terminal domain"/>
    <property type="match status" value="1"/>
</dbReference>
<dbReference type="HAMAP" id="MF_00736">
    <property type="entry name" value="Ribosomal_uL11"/>
    <property type="match status" value="1"/>
</dbReference>
<dbReference type="InterPro" id="IPR000911">
    <property type="entry name" value="Ribosomal_uL11"/>
</dbReference>
<dbReference type="InterPro" id="IPR006519">
    <property type="entry name" value="Ribosomal_uL11_bac-typ"/>
</dbReference>
<dbReference type="InterPro" id="IPR020783">
    <property type="entry name" value="Ribosomal_uL11_C"/>
</dbReference>
<dbReference type="InterPro" id="IPR036769">
    <property type="entry name" value="Ribosomal_uL11_C_sf"/>
</dbReference>
<dbReference type="InterPro" id="IPR020785">
    <property type="entry name" value="Ribosomal_uL11_CS"/>
</dbReference>
<dbReference type="InterPro" id="IPR020784">
    <property type="entry name" value="Ribosomal_uL11_N"/>
</dbReference>
<dbReference type="InterPro" id="IPR036796">
    <property type="entry name" value="Ribosomal_uL11_N_sf"/>
</dbReference>
<dbReference type="NCBIfam" id="TIGR01632">
    <property type="entry name" value="L11_bact"/>
    <property type="match status" value="1"/>
</dbReference>
<dbReference type="PANTHER" id="PTHR11661">
    <property type="entry name" value="60S RIBOSOMAL PROTEIN L12"/>
    <property type="match status" value="1"/>
</dbReference>
<dbReference type="PANTHER" id="PTHR11661:SF1">
    <property type="entry name" value="LARGE RIBOSOMAL SUBUNIT PROTEIN UL11M"/>
    <property type="match status" value="1"/>
</dbReference>
<dbReference type="Pfam" id="PF00298">
    <property type="entry name" value="Ribosomal_L11"/>
    <property type="match status" value="1"/>
</dbReference>
<dbReference type="Pfam" id="PF03946">
    <property type="entry name" value="Ribosomal_L11_N"/>
    <property type="match status" value="1"/>
</dbReference>
<dbReference type="SMART" id="SM00649">
    <property type="entry name" value="RL11"/>
    <property type="match status" value="1"/>
</dbReference>
<dbReference type="SUPFAM" id="SSF54747">
    <property type="entry name" value="Ribosomal L11/L12e N-terminal domain"/>
    <property type="match status" value="1"/>
</dbReference>
<dbReference type="SUPFAM" id="SSF46906">
    <property type="entry name" value="Ribosomal protein L11, C-terminal domain"/>
    <property type="match status" value="1"/>
</dbReference>
<dbReference type="PROSITE" id="PS00359">
    <property type="entry name" value="RIBOSOMAL_L11"/>
    <property type="match status" value="1"/>
</dbReference>
<evidence type="ECO:0000255" key="1">
    <source>
        <dbReference type="HAMAP-Rule" id="MF_00736"/>
    </source>
</evidence>
<evidence type="ECO:0000305" key="2"/>
<reference key="1">
    <citation type="journal article" date="2008" name="PLoS ONE">
        <title>A recalibrated molecular clock and independent origins for the cholera pandemic clones.</title>
        <authorList>
            <person name="Feng L."/>
            <person name="Reeves P.R."/>
            <person name="Lan R."/>
            <person name="Ren Y."/>
            <person name="Gao C."/>
            <person name="Zhou Z."/>
            <person name="Ren Y."/>
            <person name="Cheng J."/>
            <person name="Wang W."/>
            <person name="Wang J."/>
            <person name="Qian W."/>
            <person name="Li D."/>
            <person name="Wang L."/>
        </authorList>
    </citation>
    <scope>NUCLEOTIDE SEQUENCE [LARGE SCALE GENOMIC DNA]</scope>
    <source>
        <strain>M66-2</strain>
    </source>
</reference>
<proteinExistence type="inferred from homology"/>
<sequence length="142" mass="14779">MAKKVEAYVKLQVAAGMANPSPPVGPALGQRGVNIMEFCKAFNARTESLEKGLPIPVVITVYSDRSFTFETKTPPASVLLKKAAGIKSGSARPNTAKVGTITDAQIQEIAATKAADMTGADIEAMKRSIAGTARSMGLVVEG</sequence>
<gene>
    <name evidence="1" type="primary">rplK</name>
    <name type="ordered locus">VCM66_0308</name>
</gene>
<protein>
    <recommendedName>
        <fullName evidence="1">Large ribosomal subunit protein uL11</fullName>
    </recommendedName>
    <alternativeName>
        <fullName evidence="2">50S ribosomal protein L11</fullName>
    </alternativeName>
</protein>
<feature type="chain" id="PRO_1000195744" description="Large ribosomal subunit protein uL11">
    <location>
        <begin position="1"/>
        <end position="142"/>
    </location>
</feature>
<comment type="function">
    <text evidence="1">Forms part of the ribosomal stalk which helps the ribosome interact with GTP-bound translation factors.</text>
</comment>
<comment type="subunit">
    <text evidence="1">Part of the ribosomal stalk of the 50S ribosomal subunit. Interacts with L10 and the large rRNA to form the base of the stalk. L10 forms an elongated spine to which L12 dimers bind in a sequential fashion forming a multimeric L10(L12)X complex.</text>
</comment>
<comment type="PTM">
    <text evidence="1">One or more lysine residues are methylated.</text>
</comment>
<comment type="similarity">
    <text evidence="1">Belongs to the universal ribosomal protein uL11 family.</text>
</comment>
<organism>
    <name type="scientific">Vibrio cholerae serotype O1 (strain M66-2)</name>
    <dbReference type="NCBI Taxonomy" id="579112"/>
    <lineage>
        <taxon>Bacteria</taxon>
        <taxon>Pseudomonadati</taxon>
        <taxon>Pseudomonadota</taxon>
        <taxon>Gammaproteobacteria</taxon>
        <taxon>Vibrionales</taxon>
        <taxon>Vibrionaceae</taxon>
        <taxon>Vibrio</taxon>
    </lineage>
</organism>